<comment type="function">
    <text evidence="1">May influence blood pressure by functioning as a GTPase-activating protein in vascular smooth muscle.</text>
</comment>
<comment type="sequence caution" evidence="6">
    <conflict type="erroneous gene model prediction">
        <sequence resource="EMBL-CDS" id="CAE47767"/>
    </conflict>
</comment>
<comment type="sequence caution" evidence="6">
    <conflict type="frameshift">
        <sequence resource="EMBL" id="EB935770"/>
    </conflict>
</comment>
<accession>Q6ZM89</accession>
<accession>F1QUD4</accession>
<protein>
    <recommendedName>
        <fullName>Rho GTPase-activating protein 42</fullName>
    </recommendedName>
    <alternativeName>
        <fullName>Rho GTPase-activating protein 10-like</fullName>
    </alternativeName>
    <alternativeName>
        <fullName>Rho-type GTPase-activating protein 42</fullName>
    </alternativeName>
</protein>
<name>RH42A_DANRE</name>
<keyword id="KW-0175">Coiled coil</keyword>
<keyword id="KW-0343">GTPase activation</keyword>
<keyword id="KW-1185">Reference proteome</keyword>
<evidence type="ECO:0000250" key="1">
    <source>
        <dbReference type="UniProtKB" id="B2RQE8"/>
    </source>
</evidence>
<evidence type="ECO:0000255" key="2"/>
<evidence type="ECO:0000255" key="3">
    <source>
        <dbReference type="PROSITE-ProRule" id="PRU00145"/>
    </source>
</evidence>
<evidence type="ECO:0000255" key="4">
    <source>
        <dbReference type="PROSITE-ProRule" id="PRU00172"/>
    </source>
</evidence>
<evidence type="ECO:0000256" key="5">
    <source>
        <dbReference type="SAM" id="MobiDB-lite"/>
    </source>
</evidence>
<evidence type="ECO:0000305" key="6"/>
<evidence type="ECO:0000312" key="7">
    <source>
        <dbReference type="ZFIN" id="ZDB-GENE-030131-8077"/>
    </source>
</evidence>
<organism>
    <name type="scientific">Danio rerio</name>
    <name type="common">Zebrafish</name>
    <name type="synonym">Brachydanio rerio</name>
    <dbReference type="NCBI Taxonomy" id="7955"/>
    <lineage>
        <taxon>Eukaryota</taxon>
        <taxon>Metazoa</taxon>
        <taxon>Chordata</taxon>
        <taxon>Craniata</taxon>
        <taxon>Vertebrata</taxon>
        <taxon>Euteleostomi</taxon>
        <taxon>Actinopterygii</taxon>
        <taxon>Neopterygii</taxon>
        <taxon>Teleostei</taxon>
        <taxon>Ostariophysi</taxon>
        <taxon>Cypriniformes</taxon>
        <taxon>Danionidae</taxon>
        <taxon>Danioninae</taxon>
        <taxon>Danio</taxon>
    </lineage>
</organism>
<gene>
    <name evidence="7" type="primary">arhgap42a</name>
    <name type="ORF">si:bz1p14.10</name>
    <name type="ORF">si:rp71-1p14.10</name>
</gene>
<sequence length="805" mass="91152">MGLPALEFSDSFLDSPDFRERLKCHEIELDRTNKFIKELIKDGNMLISALKSLSAAVQKFSQSLQDFQFECIGDAETDDEINIAQSFKEFSQLLNTVEEERRRLIQNADDVLITPLEKFRKEQIGAAKEGKKKFDKETEKYYTVLEKHLSLSSRKKESLLQEADTQISKERQVFYDASLEYVFKIQEVQERKKFEFVEPLLAFLQGLFTFYHEGYELAHEFEPYKQQLQFNLQNTRNNFESTRQEVENLMRRIRSAEQDFKAPGQWTMEGFLYVQEKRPLGCTWTRHYCTYEKGTKMFTMSNSELKTGGKQNGLIMSPPEMFKLKSCIRRRTDSIDKRFCFDIEVVERHGIITLQSLSESNRRLWMEAMDGKEPIYTLPALLSKKEETFLNEAGFNFVRKCIESVEARGINTLGLYRIGGVNSKVQRLMTSVFAAKAPADLDLDPDTWDNKTITSGLKNYLRCLAEPLMTYRLHKDFIMAVKSDDQNYRVCAVHALVYKLPDKNKEMLNLLIKHLHVVSTHSQKNLMTVSNLGVIFGPTLMRSQEETVAAMMNIKFQNIVVEILIENYDKIFHQAPDPNVPLPHPQSHSQSRGGARRSKAICLSSGSRKSRGLYPPALCLADADSDTFSSSPSSTPMGSMESLSSHSSEQNSCSKTGSPSRNKHKASGSLCWTTPSPSTNGPKSPACTTSPDSSSKEDANKTDGEWEEALSTSPGDRSSPASELLHRTLGETAEDQRSLSSCSSLTSLHISEGFRSCHGSIQSLVSRSQRDSLKSLHMPDLPPKDGMRFRDDSSASNGYQRPGSV</sequence>
<dbReference type="EMBL" id="AL627325">
    <property type="protein sequence ID" value="CAE47767.1"/>
    <property type="status" value="ALT_SEQ"/>
    <property type="molecule type" value="Genomic_DNA"/>
</dbReference>
<dbReference type="EMBL" id="BX510940">
    <property type="status" value="NOT_ANNOTATED_CDS"/>
    <property type="molecule type" value="Genomic_DNA"/>
</dbReference>
<dbReference type="EMBL" id="CU695000">
    <property type="status" value="NOT_ANNOTATED_CDS"/>
    <property type="molecule type" value="Genomic_DNA"/>
</dbReference>
<dbReference type="EMBL" id="EB935770">
    <property type="status" value="NOT_ANNOTATED_CDS"/>
    <property type="molecule type" value="mRNA"/>
</dbReference>
<dbReference type="SMR" id="Q6ZM89"/>
<dbReference type="FunCoup" id="Q6ZM89">
    <property type="interactions" value="395"/>
</dbReference>
<dbReference type="STRING" id="7955.ENSDARP00000126225"/>
<dbReference type="PaxDb" id="7955-ENSDARP00000126225"/>
<dbReference type="AGR" id="ZFIN:ZDB-GENE-030131-8077"/>
<dbReference type="ZFIN" id="ZDB-GENE-030131-8077">
    <property type="gene designation" value="arhgap42a"/>
</dbReference>
<dbReference type="eggNOG" id="KOG1451">
    <property type="taxonomic scope" value="Eukaryota"/>
</dbReference>
<dbReference type="InParanoid" id="Q6ZM89"/>
<dbReference type="PhylomeDB" id="Q6ZM89"/>
<dbReference type="Reactome" id="R-DRE-8980692">
    <property type="pathway name" value="RHOA GTPase cycle"/>
</dbReference>
<dbReference type="Reactome" id="R-DRE-9013148">
    <property type="pathway name" value="CDC42 GTPase cycle"/>
</dbReference>
<dbReference type="Reactome" id="R-DRE-9013149">
    <property type="pathway name" value="RAC1 GTPase cycle"/>
</dbReference>
<dbReference type="Reactome" id="R-DRE-9013404">
    <property type="pathway name" value="RAC2 GTPase cycle"/>
</dbReference>
<dbReference type="Reactome" id="R-DRE-9013423">
    <property type="pathway name" value="RAC3 GTPase cycle"/>
</dbReference>
<dbReference type="PRO" id="PR:Q6ZM89"/>
<dbReference type="Proteomes" id="UP000000437">
    <property type="component" value="Unplaced"/>
</dbReference>
<dbReference type="GO" id="GO:0005737">
    <property type="term" value="C:cytoplasm"/>
    <property type="evidence" value="ECO:0007669"/>
    <property type="project" value="InterPro"/>
</dbReference>
<dbReference type="GO" id="GO:0005096">
    <property type="term" value="F:GTPase activator activity"/>
    <property type="evidence" value="ECO:0000318"/>
    <property type="project" value="GO_Central"/>
</dbReference>
<dbReference type="GO" id="GO:0007165">
    <property type="term" value="P:signal transduction"/>
    <property type="evidence" value="ECO:0007669"/>
    <property type="project" value="InterPro"/>
</dbReference>
<dbReference type="CDD" id="cd01249">
    <property type="entry name" value="BAR-PH_GRAF_family"/>
    <property type="match status" value="1"/>
</dbReference>
<dbReference type="CDD" id="cd04374">
    <property type="entry name" value="RhoGAP_Graf"/>
    <property type="match status" value="1"/>
</dbReference>
<dbReference type="FunFam" id="2.30.29.30:FF:000161">
    <property type="entry name" value="Rho GTPase activating protein 42"/>
    <property type="match status" value="1"/>
</dbReference>
<dbReference type="FunFam" id="1.20.1270.60:FF:000001">
    <property type="entry name" value="Rho GTPase-activating protein 26"/>
    <property type="match status" value="1"/>
</dbReference>
<dbReference type="FunFam" id="1.10.555.10:FF:000008">
    <property type="entry name" value="Rho GTPase-activating protein 42"/>
    <property type="match status" value="1"/>
</dbReference>
<dbReference type="Gene3D" id="1.20.1270.60">
    <property type="entry name" value="Arfaptin homology (AH) domain/BAR domain"/>
    <property type="match status" value="1"/>
</dbReference>
<dbReference type="Gene3D" id="2.30.29.30">
    <property type="entry name" value="Pleckstrin-homology domain (PH domain)/Phosphotyrosine-binding domain (PTB)"/>
    <property type="match status" value="1"/>
</dbReference>
<dbReference type="Gene3D" id="1.10.555.10">
    <property type="entry name" value="Rho GTPase activation protein"/>
    <property type="match status" value="1"/>
</dbReference>
<dbReference type="InterPro" id="IPR027267">
    <property type="entry name" value="AH/BAR_dom_sf"/>
</dbReference>
<dbReference type="InterPro" id="IPR004148">
    <property type="entry name" value="BAR_dom"/>
</dbReference>
<dbReference type="InterPro" id="IPR047234">
    <property type="entry name" value="GRAF_fam"/>
</dbReference>
<dbReference type="InterPro" id="IPR011993">
    <property type="entry name" value="PH-like_dom_sf"/>
</dbReference>
<dbReference type="InterPro" id="IPR001849">
    <property type="entry name" value="PH_domain"/>
</dbReference>
<dbReference type="InterPro" id="IPR047225">
    <property type="entry name" value="PH_GRAF"/>
</dbReference>
<dbReference type="InterPro" id="IPR008936">
    <property type="entry name" value="Rho_GTPase_activation_prot"/>
</dbReference>
<dbReference type="InterPro" id="IPR000198">
    <property type="entry name" value="RhoGAP_dom"/>
</dbReference>
<dbReference type="PANTHER" id="PTHR12552">
    <property type="entry name" value="OLIGOPHRENIN 1"/>
    <property type="match status" value="1"/>
</dbReference>
<dbReference type="PANTHER" id="PTHR12552:SF3">
    <property type="entry name" value="RHO GTPASE-ACTIVATING PROTEIN 42"/>
    <property type="match status" value="1"/>
</dbReference>
<dbReference type="Pfam" id="PF16746">
    <property type="entry name" value="BAR_3"/>
    <property type="match status" value="1"/>
</dbReference>
<dbReference type="Pfam" id="PF00169">
    <property type="entry name" value="PH"/>
    <property type="match status" value="1"/>
</dbReference>
<dbReference type="Pfam" id="PF00620">
    <property type="entry name" value="RhoGAP"/>
    <property type="match status" value="1"/>
</dbReference>
<dbReference type="SMART" id="SM00233">
    <property type="entry name" value="PH"/>
    <property type="match status" value="1"/>
</dbReference>
<dbReference type="SMART" id="SM00324">
    <property type="entry name" value="RhoGAP"/>
    <property type="match status" value="1"/>
</dbReference>
<dbReference type="SUPFAM" id="SSF103657">
    <property type="entry name" value="BAR/IMD domain-like"/>
    <property type="match status" value="1"/>
</dbReference>
<dbReference type="SUPFAM" id="SSF48350">
    <property type="entry name" value="GTPase activation domain, GAP"/>
    <property type="match status" value="1"/>
</dbReference>
<dbReference type="SUPFAM" id="SSF50729">
    <property type="entry name" value="PH domain-like"/>
    <property type="match status" value="1"/>
</dbReference>
<dbReference type="PROSITE" id="PS50003">
    <property type="entry name" value="PH_DOMAIN"/>
    <property type="match status" value="1"/>
</dbReference>
<dbReference type="PROSITE" id="PS50238">
    <property type="entry name" value="RHOGAP"/>
    <property type="match status" value="1"/>
</dbReference>
<reference key="1">
    <citation type="journal article" date="2013" name="Nature">
        <title>The zebrafish reference genome sequence and its relationship to the human genome.</title>
        <authorList>
            <person name="Howe K."/>
            <person name="Clark M.D."/>
            <person name="Torroja C.F."/>
            <person name="Torrance J."/>
            <person name="Berthelot C."/>
            <person name="Muffato M."/>
            <person name="Collins J.E."/>
            <person name="Humphray S."/>
            <person name="McLaren K."/>
            <person name="Matthews L."/>
            <person name="McLaren S."/>
            <person name="Sealy I."/>
            <person name="Caccamo M."/>
            <person name="Churcher C."/>
            <person name="Scott C."/>
            <person name="Barrett J.C."/>
            <person name="Koch R."/>
            <person name="Rauch G.J."/>
            <person name="White S."/>
            <person name="Chow W."/>
            <person name="Kilian B."/>
            <person name="Quintais L.T."/>
            <person name="Guerra-Assuncao J.A."/>
            <person name="Zhou Y."/>
            <person name="Gu Y."/>
            <person name="Yen J."/>
            <person name="Vogel J.H."/>
            <person name="Eyre T."/>
            <person name="Redmond S."/>
            <person name="Banerjee R."/>
            <person name="Chi J."/>
            <person name="Fu B."/>
            <person name="Langley E."/>
            <person name="Maguire S.F."/>
            <person name="Laird G.K."/>
            <person name="Lloyd D."/>
            <person name="Kenyon E."/>
            <person name="Donaldson S."/>
            <person name="Sehra H."/>
            <person name="Almeida-King J."/>
            <person name="Loveland J."/>
            <person name="Trevanion S."/>
            <person name="Jones M."/>
            <person name="Quail M."/>
            <person name="Willey D."/>
            <person name="Hunt A."/>
            <person name="Burton J."/>
            <person name="Sims S."/>
            <person name="McLay K."/>
            <person name="Plumb B."/>
            <person name="Davis J."/>
            <person name="Clee C."/>
            <person name="Oliver K."/>
            <person name="Clark R."/>
            <person name="Riddle C."/>
            <person name="Elliot D."/>
            <person name="Threadgold G."/>
            <person name="Harden G."/>
            <person name="Ware D."/>
            <person name="Begum S."/>
            <person name="Mortimore B."/>
            <person name="Kerry G."/>
            <person name="Heath P."/>
            <person name="Phillimore B."/>
            <person name="Tracey A."/>
            <person name="Corby N."/>
            <person name="Dunn M."/>
            <person name="Johnson C."/>
            <person name="Wood J."/>
            <person name="Clark S."/>
            <person name="Pelan S."/>
            <person name="Griffiths G."/>
            <person name="Smith M."/>
            <person name="Glithero R."/>
            <person name="Howden P."/>
            <person name="Barker N."/>
            <person name="Lloyd C."/>
            <person name="Stevens C."/>
            <person name="Harley J."/>
            <person name="Holt K."/>
            <person name="Panagiotidis G."/>
            <person name="Lovell J."/>
            <person name="Beasley H."/>
            <person name="Henderson C."/>
            <person name="Gordon D."/>
            <person name="Auger K."/>
            <person name="Wright D."/>
            <person name="Collins J."/>
            <person name="Raisen C."/>
            <person name="Dyer L."/>
            <person name="Leung K."/>
            <person name="Robertson L."/>
            <person name="Ambridge K."/>
            <person name="Leongamornlert D."/>
            <person name="McGuire S."/>
            <person name="Gilderthorp R."/>
            <person name="Griffiths C."/>
            <person name="Manthravadi D."/>
            <person name="Nichol S."/>
            <person name="Barker G."/>
            <person name="Whitehead S."/>
            <person name="Kay M."/>
            <person name="Brown J."/>
            <person name="Murnane C."/>
            <person name="Gray E."/>
            <person name="Humphries M."/>
            <person name="Sycamore N."/>
            <person name="Barker D."/>
            <person name="Saunders D."/>
            <person name="Wallis J."/>
            <person name="Babbage A."/>
            <person name="Hammond S."/>
            <person name="Mashreghi-Mohammadi M."/>
            <person name="Barr L."/>
            <person name="Martin S."/>
            <person name="Wray P."/>
            <person name="Ellington A."/>
            <person name="Matthews N."/>
            <person name="Ellwood M."/>
            <person name="Woodmansey R."/>
            <person name="Clark G."/>
            <person name="Cooper J."/>
            <person name="Tromans A."/>
            <person name="Grafham D."/>
            <person name="Skuce C."/>
            <person name="Pandian R."/>
            <person name="Andrews R."/>
            <person name="Harrison E."/>
            <person name="Kimberley A."/>
            <person name="Garnett J."/>
            <person name="Fosker N."/>
            <person name="Hall R."/>
            <person name="Garner P."/>
            <person name="Kelly D."/>
            <person name="Bird C."/>
            <person name="Palmer S."/>
            <person name="Gehring I."/>
            <person name="Berger A."/>
            <person name="Dooley C.M."/>
            <person name="Ersan-Urun Z."/>
            <person name="Eser C."/>
            <person name="Geiger H."/>
            <person name="Geisler M."/>
            <person name="Karotki L."/>
            <person name="Kirn A."/>
            <person name="Konantz J."/>
            <person name="Konantz M."/>
            <person name="Oberlander M."/>
            <person name="Rudolph-Geiger S."/>
            <person name="Teucke M."/>
            <person name="Lanz C."/>
            <person name="Raddatz G."/>
            <person name="Osoegawa K."/>
            <person name="Zhu B."/>
            <person name="Rapp A."/>
            <person name="Widaa S."/>
            <person name="Langford C."/>
            <person name="Yang F."/>
            <person name="Schuster S.C."/>
            <person name="Carter N.P."/>
            <person name="Harrow J."/>
            <person name="Ning Z."/>
            <person name="Herrero J."/>
            <person name="Searle S.M."/>
            <person name="Enright A."/>
            <person name="Geisler R."/>
            <person name="Plasterk R.H."/>
            <person name="Lee C."/>
            <person name="Westerfield M."/>
            <person name="de Jong P.J."/>
            <person name="Zon L.I."/>
            <person name="Postlethwait J.H."/>
            <person name="Nusslein-Volhard C."/>
            <person name="Hubbard T.J."/>
            <person name="Roest Crollius H."/>
            <person name="Rogers J."/>
            <person name="Stemple D.L."/>
        </authorList>
    </citation>
    <scope>NUCLEOTIDE SEQUENCE [LARGE SCALE GENOMIC DNA]</scope>
    <source>
        <strain>Tuebingen</strain>
    </source>
</reference>
<reference key="2">
    <citation type="submission" date="2006-05" db="EMBL/GenBank/DDBJ databases">
        <title>Exelixis Danio rerio EST project.</title>
        <authorList>
            <person name="Chen F."/>
            <person name="Jin Y."/>
            <person name="Zeng K."/>
            <person name="Gnirke A."/>
            <person name="Baille M."/>
            <person name="Cheung L.M."/>
            <person name="Chong A."/>
            <person name="Garrick B."/>
            <person name="Murray L."/>
            <person name="Oliva J."/>
            <person name="Park C."/>
            <person name="Reyes J."/>
            <person name="Yang J."/>
            <person name="Amundsen C."/>
            <person name="Orton A."/>
            <person name="Shao A."/>
            <person name="Platt D."/>
            <person name="Swimmer C."/>
        </authorList>
    </citation>
    <scope>NUCLEOTIDE SEQUENCE [LARGE SCALE MRNA] OF 1-164</scope>
    <source>
        <tissue>Testis</tissue>
    </source>
</reference>
<feature type="chain" id="PRO_0000342408" description="Rho GTPase-activating protein 42">
    <location>
        <begin position="1"/>
        <end position="805"/>
    </location>
</feature>
<feature type="domain" description="BAR">
    <location>
        <begin position="7"/>
        <end position="262"/>
    </location>
</feature>
<feature type="domain" description="PH" evidence="3">
    <location>
        <begin position="265"/>
        <end position="374"/>
    </location>
</feature>
<feature type="domain" description="Rho-GAP" evidence="4">
    <location>
        <begin position="376"/>
        <end position="572"/>
    </location>
</feature>
<feature type="region of interest" description="Disordered" evidence="5">
    <location>
        <begin position="576"/>
        <end position="600"/>
    </location>
</feature>
<feature type="region of interest" description="Disordered" evidence="5">
    <location>
        <begin position="625"/>
        <end position="725"/>
    </location>
</feature>
<feature type="region of interest" description="Disordered" evidence="5">
    <location>
        <begin position="765"/>
        <end position="805"/>
    </location>
</feature>
<feature type="coiled-coil region" evidence="2">
    <location>
        <begin position="225"/>
        <end position="262"/>
    </location>
</feature>
<feature type="compositionally biased region" description="Low complexity" evidence="5">
    <location>
        <begin position="626"/>
        <end position="654"/>
    </location>
</feature>
<feature type="compositionally biased region" description="Polar residues" evidence="5">
    <location>
        <begin position="670"/>
        <end position="693"/>
    </location>
</feature>
<feature type="compositionally biased region" description="Basic and acidic residues" evidence="5">
    <location>
        <begin position="694"/>
        <end position="704"/>
    </location>
</feature>
<feature type="compositionally biased region" description="Polar residues" evidence="5">
    <location>
        <begin position="710"/>
        <end position="721"/>
    </location>
</feature>
<feature type="compositionally biased region" description="Basic and acidic residues" evidence="5">
    <location>
        <begin position="782"/>
        <end position="793"/>
    </location>
</feature>
<feature type="site" description="Arginine finger; crucial for GTP hydrolysis by stabilizing the transition state" evidence="4">
    <location>
        <position position="417"/>
    </location>
</feature>
<feature type="sequence conflict" description="In Ref. 1; CAE47767." evidence="6" ref="1">
    <original>M</original>
    <variation>L</variation>
    <location>
        <position position="778"/>
    </location>
</feature>
<proteinExistence type="evidence at transcript level"/>